<keyword id="KW-0066">ATP synthesis</keyword>
<keyword id="KW-0138">CF(0)</keyword>
<keyword id="KW-0375">Hydrogen ion transport</keyword>
<keyword id="KW-0406">Ion transport</keyword>
<keyword id="KW-0472">Membrane</keyword>
<keyword id="KW-1185">Reference proteome</keyword>
<keyword id="KW-0793">Thylakoid</keyword>
<keyword id="KW-0812">Transmembrane</keyword>
<keyword id="KW-1133">Transmembrane helix</keyword>
<keyword id="KW-0813">Transport</keyword>
<protein>
    <recommendedName>
        <fullName evidence="1">ATP synthase subunit a</fullName>
    </recommendedName>
    <alternativeName>
        <fullName evidence="1">ATP synthase F0 sector subunit a</fullName>
    </alternativeName>
    <alternativeName>
        <fullName evidence="1">F-ATPase subunit 6</fullName>
    </alternativeName>
</protein>
<gene>
    <name evidence="1" type="primary">atpB</name>
    <name evidence="1" type="synonym">atpI</name>
    <name type="ordered locus">PMN2A_0986</name>
</gene>
<accession>Q46J52</accession>
<organism>
    <name type="scientific">Prochlorococcus marinus (strain NATL2A)</name>
    <dbReference type="NCBI Taxonomy" id="59920"/>
    <lineage>
        <taxon>Bacteria</taxon>
        <taxon>Bacillati</taxon>
        <taxon>Cyanobacteriota</taxon>
        <taxon>Cyanophyceae</taxon>
        <taxon>Synechococcales</taxon>
        <taxon>Prochlorococcaceae</taxon>
        <taxon>Prochlorococcus</taxon>
    </lineage>
</organism>
<feature type="chain" id="PRO_0000362384" description="ATP synthase subunit a">
    <location>
        <begin position="1"/>
        <end position="241"/>
    </location>
</feature>
<feature type="transmembrane region" description="Helical" evidence="1">
    <location>
        <begin position="30"/>
        <end position="50"/>
    </location>
</feature>
<feature type="transmembrane region" description="Helical" evidence="1">
    <location>
        <begin position="91"/>
        <end position="111"/>
    </location>
</feature>
<feature type="transmembrane region" description="Helical" evidence="1">
    <location>
        <begin position="128"/>
        <end position="148"/>
    </location>
</feature>
<feature type="transmembrane region" description="Helical" evidence="1">
    <location>
        <begin position="193"/>
        <end position="213"/>
    </location>
</feature>
<feature type="transmembrane region" description="Helical" evidence="1">
    <location>
        <begin position="214"/>
        <end position="234"/>
    </location>
</feature>
<sequence length="241" mass="27258">MGFLPFVFPFAELEVGQQLYWQIGNFRIHGQVFMTSWLLIGALLALVVIGTKKMERDPRGVQNLLEFLWDYIRDLARTQIGEKVYRDWMPFIGTLFLFIFVSNWGGALVPWKLIKLPSGELGAPTADINTTVALALLVSLSYFYAGLSNKGLRYFEYYVHPTPIMLPFKIVEDFTKPLSLSFRLFGNILADELVVAVLVFLVPLVLPVPVMFLGLFTSAIQALIFATLAAYYIGEAVEEHH</sequence>
<dbReference type="EMBL" id="CP000095">
    <property type="protein sequence ID" value="AAZ58476.1"/>
    <property type="molecule type" value="Genomic_DNA"/>
</dbReference>
<dbReference type="RefSeq" id="WP_011295331.1">
    <property type="nucleotide sequence ID" value="NC_007335.2"/>
</dbReference>
<dbReference type="SMR" id="Q46J52"/>
<dbReference type="STRING" id="59920.PMN2A_0986"/>
<dbReference type="KEGG" id="pmn:PMN2A_0986"/>
<dbReference type="HOGENOM" id="CLU_041018_2_4_3"/>
<dbReference type="OrthoDB" id="9789241at2"/>
<dbReference type="PhylomeDB" id="Q46J52"/>
<dbReference type="Proteomes" id="UP000002535">
    <property type="component" value="Chromosome"/>
</dbReference>
<dbReference type="GO" id="GO:0031676">
    <property type="term" value="C:plasma membrane-derived thylakoid membrane"/>
    <property type="evidence" value="ECO:0007669"/>
    <property type="project" value="UniProtKB-SubCell"/>
</dbReference>
<dbReference type="GO" id="GO:0045259">
    <property type="term" value="C:proton-transporting ATP synthase complex"/>
    <property type="evidence" value="ECO:0007669"/>
    <property type="project" value="UniProtKB-KW"/>
</dbReference>
<dbReference type="GO" id="GO:0046933">
    <property type="term" value="F:proton-transporting ATP synthase activity, rotational mechanism"/>
    <property type="evidence" value="ECO:0007669"/>
    <property type="project" value="UniProtKB-UniRule"/>
</dbReference>
<dbReference type="CDD" id="cd00310">
    <property type="entry name" value="ATP-synt_Fo_a_6"/>
    <property type="match status" value="1"/>
</dbReference>
<dbReference type="FunFam" id="1.20.120.220:FF:000001">
    <property type="entry name" value="ATP synthase subunit a, chloroplastic"/>
    <property type="match status" value="1"/>
</dbReference>
<dbReference type="Gene3D" id="1.20.120.220">
    <property type="entry name" value="ATP synthase, F0 complex, subunit A"/>
    <property type="match status" value="1"/>
</dbReference>
<dbReference type="HAMAP" id="MF_01393">
    <property type="entry name" value="ATP_synth_a_bact"/>
    <property type="match status" value="1"/>
</dbReference>
<dbReference type="InterPro" id="IPR045082">
    <property type="entry name" value="ATP_syn_F0_a_bact/chloroplast"/>
</dbReference>
<dbReference type="InterPro" id="IPR000568">
    <property type="entry name" value="ATP_synth_F0_asu"/>
</dbReference>
<dbReference type="InterPro" id="IPR023011">
    <property type="entry name" value="ATP_synth_F0_asu_AS"/>
</dbReference>
<dbReference type="InterPro" id="IPR035908">
    <property type="entry name" value="F0_ATP_A_sf"/>
</dbReference>
<dbReference type="NCBIfam" id="TIGR01131">
    <property type="entry name" value="ATP_synt_6_or_A"/>
    <property type="match status" value="1"/>
</dbReference>
<dbReference type="PANTHER" id="PTHR42823">
    <property type="entry name" value="ATP SYNTHASE SUBUNIT A, CHLOROPLASTIC"/>
    <property type="match status" value="1"/>
</dbReference>
<dbReference type="PANTHER" id="PTHR42823:SF3">
    <property type="entry name" value="ATP SYNTHASE SUBUNIT A, CHLOROPLASTIC"/>
    <property type="match status" value="1"/>
</dbReference>
<dbReference type="Pfam" id="PF00119">
    <property type="entry name" value="ATP-synt_A"/>
    <property type="match status" value="1"/>
</dbReference>
<dbReference type="PRINTS" id="PR00123">
    <property type="entry name" value="ATPASEA"/>
</dbReference>
<dbReference type="SUPFAM" id="SSF81336">
    <property type="entry name" value="F1F0 ATP synthase subunit A"/>
    <property type="match status" value="1"/>
</dbReference>
<dbReference type="PROSITE" id="PS00449">
    <property type="entry name" value="ATPASE_A"/>
    <property type="match status" value="1"/>
</dbReference>
<name>ATP6_PROMT</name>
<proteinExistence type="inferred from homology"/>
<comment type="function">
    <text evidence="1">Key component of the proton channel; it plays a direct role in the translocation of protons across the membrane.</text>
</comment>
<comment type="subunit">
    <text evidence="1">F-type ATPases have 2 components, CF(1) - the catalytic core - and CF(0) - the membrane proton channel. CF(1) has five subunits: alpha(3), beta(3), gamma(1), delta(1), epsilon(1). CF(0) has four main subunits: a, b, b' and c.</text>
</comment>
<comment type="subcellular location">
    <subcellularLocation>
        <location evidence="1">Cellular thylakoid membrane</location>
        <topology evidence="1">Multi-pass membrane protein</topology>
    </subcellularLocation>
</comment>
<comment type="similarity">
    <text evidence="1">Belongs to the ATPase A chain family.</text>
</comment>
<evidence type="ECO:0000255" key="1">
    <source>
        <dbReference type="HAMAP-Rule" id="MF_01393"/>
    </source>
</evidence>
<reference key="1">
    <citation type="journal article" date="2007" name="PLoS Genet.">
        <title>Patterns and implications of gene gain and loss in the evolution of Prochlorococcus.</title>
        <authorList>
            <person name="Kettler G.C."/>
            <person name="Martiny A.C."/>
            <person name="Huang K."/>
            <person name="Zucker J."/>
            <person name="Coleman M.L."/>
            <person name="Rodrigue S."/>
            <person name="Chen F."/>
            <person name="Lapidus A."/>
            <person name="Ferriera S."/>
            <person name="Johnson J."/>
            <person name="Steglich C."/>
            <person name="Church G.M."/>
            <person name="Richardson P."/>
            <person name="Chisholm S.W."/>
        </authorList>
    </citation>
    <scope>NUCLEOTIDE SEQUENCE [LARGE SCALE GENOMIC DNA]</scope>
    <source>
        <strain>NATL2A</strain>
    </source>
</reference>